<proteinExistence type="inferred from homology"/>
<gene>
    <name evidence="1" type="primary">fabH</name>
    <name type="ordered locus">MAV_4612</name>
</gene>
<name>FABH_MYCA1</name>
<dbReference type="EC" id="2.3.1.301" evidence="1"/>
<dbReference type="EMBL" id="CP000479">
    <property type="protein sequence ID" value="ABK65663.1"/>
    <property type="molecule type" value="Genomic_DNA"/>
</dbReference>
<dbReference type="RefSeq" id="WP_011726158.1">
    <property type="nucleotide sequence ID" value="NC_008595.1"/>
</dbReference>
<dbReference type="SMR" id="A0QLF3"/>
<dbReference type="KEGG" id="mav:MAV_4612"/>
<dbReference type="HOGENOM" id="CLU_039592_4_0_11"/>
<dbReference type="UniPathway" id="UPA00094"/>
<dbReference type="UniPathway" id="UPA00915"/>
<dbReference type="Proteomes" id="UP000001574">
    <property type="component" value="Chromosome"/>
</dbReference>
<dbReference type="GO" id="GO:0005737">
    <property type="term" value="C:cytoplasm"/>
    <property type="evidence" value="ECO:0007669"/>
    <property type="project" value="UniProtKB-SubCell"/>
</dbReference>
<dbReference type="GO" id="GO:0004315">
    <property type="term" value="F:3-oxoacyl-[acyl-carrier-protein] synthase activity"/>
    <property type="evidence" value="ECO:0007669"/>
    <property type="project" value="InterPro"/>
</dbReference>
<dbReference type="GO" id="GO:0033818">
    <property type="term" value="F:beta-ketoacyl-acyl-carrier-protein synthase III activity"/>
    <property type="evidence" value="ECO:0007669"/>
    <property type="project" value="UniProtKB-UniRule"/>
</dbReference>
<dbReference type="GO" id="GO:0006633">
    <property type="term" value="P:fatty acid biosynthetic process"/>
    <property type="evidence" value="ECO:0007669"/>
    <property type="project" value="UniProtKB-UniRule"/>
</dbReference>
<dbReference type="CDD" id="cd00830">
    <property type="entry name" value="KAS_III"/>
    <property type="match status" value="1"/>
</dbReference>
<dbReference type="FunFam" id="3.40.47.10:FF:000076">
    <property type="entry name" value="3-oxoacyl-[acyl-carrier-protein] synthase 3"/>
    <property type="match status" value="1"/>
</dbReference>
<dbReference type="Gene3D" id="3.40.47.10">
    <property type="match status" value="2"/>
</dbReference>
<dbReference type="HAMAP" id="MF_01815">
    <property type="entry name" value="FabH"/>
    <property type="match status" value="1"/>
</dbReference>
<dbReference type="InterPro" id="IPR013747">
    <property type="entry name" value="ACP_syn_III_C"/>
</dbReference>
<dbReference type="InterPro" id="IPR013751">
    <property type="entry name" value="ACP_syn_III_N"/>
</dbReference>
<dbReference type="InterPro" id="IPR004655">
    <property type="entry name" value="FabH"/>
</dbReference>
<dbReference type="InterPro" id="IPR016039">
    <property type="entry name" value="Thiolase-like"/>
</dbReference>
<dbReference type="NCBIfam" id="TIGR00747">
    <property type="entry name" value="fabH"/>
    <property type="match status" value="1"/>
</dbReference>
<dbReference type="NCBIfam" id="NF006829">
    <property type="entry name" value="PRK09352.1"/>
    <property type="match status" value="1"/>
</dbReference>
<dbReference type="PANTHER" id="PTHR43091">
    <property type="entry name" value="3-OXOACYL-[ACYL-CARRIER-PROTEIN] SYNTHASE"/>
    <property type="match status" value="1"/>
</dbReference>
<dbReference type="PANTHER" id="PTHR43091:SF1">
    <property type="entry name" value="BETA-KETOACYL-[ACYL-CARRIER-PROTEIN] SYNTHASE III, CHLOROPLASTIC"/>
    <property type="match status" value="1"/>
</dbReference>
<dbReference type="Pfam" id="PF08545">
    <property type="entry name" value="ACP_syn_III"/>
    <property type="match status" value="1"/>
</dbReference>
<dbReference type="Pfam" id="PF08541">
    <property type="entry name" value="ACP_syn_III_C"/>
    <property type="match status" value="1"/>
</dbReference>
<dbReference type="SUPFAM" id="SSF53901">
    <property type="entry name" value="Thiolase-like"/>
    <property type="match status" value="1"/>
</dbReference>
<protein>
    <recommendedName>
        <fullName evidence="1">Mycobacterial beta-ketoacyl-[acyl-carrier-protein] synthase III</fullName>
        <shortName evidence="1">Beta-ketoacyl-ACP synthase III</shortName>
        <shortName evidence="1">KAS III</shortName>
        <ecNumber evidence="1">2.3.1.301</ecNumber>
    </recommendedName>
    <alternativeName>
        <fullName evidence="1">3-oxoacyl-[acyl-carrier-protein] synthase 3</fullName>
    </alternativeName>
    <alternativeName>
        <fullName evidence="1">3-oxoacyl-[acyl-carrier-protein] synthase III</fullName>
    </alternativeName>
</protein>
<comment type="function">
    <text evidence="1">Catalyzes the condensation reaction of fatty acid synthesis by the addition to an acyl acceptor of two carbons from malonyl-ACP. Catalyzes the first condensation reaction which initiates fatty acid synthesis and may therefore play a role in governing the total rate of fatty acid production. Possesses both acetoacetyl-ACP synthase and acetyl transacylase activities. Its substrate specificity determines the biosynthesis of branched-chain and/or straight-chain of fatty acids.</text>
</comment>
<comment type="catalytic activity">
    <reaction evidence="1">
        <text>malonyl-[ACP] + dodecanoyl-CoA + H(+) = 3-oxotetradecanoyl-[ACP] + CO2 + CoA</text>
        <dbReference type="Rhea" id="RHEA:43640"/>
        <dbReference type="Rhea" id="RHEA-COMP:9623"/>
        <dbReference type="Rhea" id="RHEA-COMP:9645"/>
        <dbReference type="ChEBI" id="CHEBI:15378"/>
        <dbReference type="ChEBI" id="CHEBI:16526"/>
        <dbReference type="ChEBI" id="CHEBI:57287"/>
        <dbReference type="ChEBI" id="CHEBI:57375"/>
        <dbReference type="ChEBI" id="CHEBI:78449"/>
        <dbReference type="ChEBI" id="CHEBI:78473"/>
        <dbReference type="EC" id="2.3.1.301"/>
    </reaction>
    <physiologicalReaction direction="left-to-right" evidence="1">
        <dbReference type="Rhea" id="RHEA:43641"/>
    </physiologicalReaction>
</comment>
<comment type="pathway">
    <text evidence="1">Lipid metabolism; fatty acid biosynthesis.</text>
</comment>
<comment type="pathway">
    <text evidence="1">Lipid metabolism; mycolic acid biosynthesis.</text>
</comment>
<comment type="subunit">
    <text evidence="1">Homodimer.</text>
</comment>
<comment type="subcellular location">
    <subcellularLocation>
        <location evidence="1">Cytoplasm</location>
    </subcellularLocation>
</comment>
<comment type="domain">
    <text evidence="1">The last Arg residue of the ACP-binding site is essential for the weak association between ACP/AcpP and FabH.</text>
</comment>
<comment type="similarity">
    <text evidence="1">Belongs to the thiolase-like superfamily. FabH family.</text>
</comment>
<keyword id="KW-0012">Acyltransferase</keyword>
<keyword id="KW-0963">Cytoplasm</keyword>
<keyword id="KW-0275">Fatty acid biosynthesis</keyword>
<keyword id="KW-0276">Fatty acid metabolism</keyword>
<keyword id="KW-0444">Lipid biosynthesis</keyword>
<keyword id="KW-0443">Lipid metabolism</keyword>
<keyword id="KW-0511">Multifunctional enzyme</keyword>
<keyword id="KW-0808">Transferase</keyword>
<feature type="chain" id="PRO_1000056377" description="Mycobacterial beta-ketoacyl-[acyl-carrier-protein] synthase III">
    <location>
        <begin position="1"/>
        <end position="335"/>
    </location>
</feature>
<feature type="region of interest" description="ACP-binding" evidence="1">
    <location>
        <begin position="259"/>
        <end position="263"/>
    </location>
</feature>
<feature type="active site" evidence="1">
    <location>
        <position position="122"/>
    </location>
</feature>
<feature type="active site" evidence="1">
    <location>
        <position position="258"/>
    </location>
</feature>
<feature type="active site" evidence="1">
    <location>
        <position position="289"/>
    </location>
</feature>
<sequence length="335" mass="34705">MKQISATSGPTNIGLLSVGSYRPQRAVTNDELCQNIDSSDEWIYSRTGIKTRRFAARDESTASMATEAGREAIAKAGLEASDIDCVVVATSTHFLQTPACGPAVAAALGATGVPAFDISAGCAGFGYALGVAADMVRGGTAGKVLVLGSEKLSPTVDMTDRSNCFIFADGAAGVVVGETPTQGIGPTVWGSDGTQATAIRQDIDWMDYLDRPTGPRPFLRLEGSAVFRWAAFEMGKVGQQAMDAAGVRPDEIDVFLPHQANSRINEILAKSLELRPDAVIANDIEHTGNTSAASIPLAMAEVLATGAAKAGDLALLIGYGAGLSYAAQVVRLPPG</sequence>
<reference key="1">
    <citation type="submission" date="2006-10" db="EMBL/GenBank/DDBJ databases">
        <authorList>
            <person name="Fleischmann R.D."/>
            <person name="Dodson R.J."/>
            <person name="Haft D.H."/>
            <person name="Merkel J.S."/>
            <person name="Nelson W.C."/>
            <person name="Fraser C.M."/>
        </authorList>
    </citation>
    <scope>NUCLEOTIDE SEQUENCE [LARGE SCALE GENOMIC DNA]</scope>
    <source>
        <strain>104</strain>
    </source>
</reference>
<accession>A0QLF3</accession>
<evidence type="ECO:0000255" key="1">
    <source>
        <dbReference type="HAMAP-Rule" id="MF_01815"/>
    </source>
</evidence>
<organism>
    <name type="scientific">Mycobacterium avium (strain 104)</name>
    <dbReference type="NCBI Taxonomy" id="243243"/>
    <lineage>
        <taxon>Bacteria</taxon>
        <taxon>Bacillati</taxon>
        <taxon>Actinomycetota</taxon>
        <taxon>Actinomycetes</taxon>
        <taxon>Mycobacteriales</taxon>
        <taxon>Mycobacteriaceae</taxon>
        <taxon>Mycobacterium</taxon>
        <taxon>Mycobacterium avium complex (MAC)</taxon>
    </lineage>
</organism>